<protein>
    <recommendedName>
        <fullName evidence="1">Large ribosomal subunit protein bL33C</fullName>
    </recommendedName>
    <alternativeName>
        <fullName>50S ribosomal protein L33 3</fullName>
    </alternativeName>
</protein>
<proteinExistence type="evidence at protein level"/>
<accession>P59628</accession>
<organism>
    <name type="scientific">Enterococcus faecalis (strain ATCC 700802 / V583)</name>
    <dbReference type="NCBI Taxonomy" id="226185"/>
    <lineage>
        <taxon>Bacteria</taxon>
        <taxon>Bacillati</taxon>
        <taxon>Bacillota</taxon>
        <taxon>Bacilli</taxon>
        <taxon>Lactobacillales</taxon>
        <taxon>Enterococcaceae</taxon>
        <taxon>Enterococcus</taxon>
    </lineage>
</organism>
<comment type="similarity">
    <text evidence="3">Belongs to the bacterial ribosomal protein bL33 family.</text>
</comment>
<sequence>MRVNITLECTSCKERNYLTNKNKRNNPDRLEKQKYCPRERKVTLHRETK</sequence>
<feature type="chain" id="PRO_0000170163" description="Large ribosomal subunit protein bL33C">
    <location>
        <begin position="1"/>
        <end position="49"/>
    </location>
</feature>
<feature type="region of interest" description="Disordered" evidence="2">
    <location>
        <begin position="20"/>
        <end position="49"/>
    </location>
</feature>
<feature type="compositionally biased region" description="Basic and acidic residues" evidence="2">
    <location>
        <begin position="25"/>
        <end position="49"/>
    </location>
</feature>
<feature type="strand" evidence="4">
    <location>
        <begin position="2"/>
        <end position="12"/>
    </location>
</feature>
<feature type="strand" evidence="4">
    <location>
        <begin position="15"/>
        <end position="22"/>
    </location>
</feature>
<feature type="turn" evidence="4">
    <location>
        <begin position="23"/>
        <end position="25"/>
    </location>
</feature>
<feature type="strand" evidence="4">
    <location>
        <begin position="31"/>
        <end position="36"/>
    </location>
</feature>
<feature type="turn" evidence="4">
    <location>
        <begin position="37"/>
        <end position="40"/>
    </location>
</feature>
<feature type="strand" evidence="4">
    <location>
        <begin position="41"/>
        <end position="47"/>
    </location>
</feature>
<evidence type="ECO:0000255" key="1">
    <source>
        <dbReference type="HAMAP-Rule" id="MF_00294"/>
    </source>
</evidence>
<evidence type="ECO:0000256" key="2">
    <source>
        <dbReference type="SAM" id="MobiDB-lite"/>
    </source>
</evidence>
<evidence type="ECO:0000305" key="3"/>
<evidence type="ECO:0007829" key="4">
    <source>
        <dbReference type="PDB" id="6WU9"/>
    </source>
</evidence>
<reference key="1">
    <citation type="journal article" date="2003" name="Science">
        <title>Role of mobile DNA in the evolution of vancomycin-resistant Enterococcus faecalis.</title>
        <authorList>
            <person name="Paulsen I.T."/>
            <person name="Banerjei L."/>
            <person name="Myers G.S.A."/>
            <person name="Nelson K.E."/>
            <person name="Seshadri R."/>
            <person name="Read T.D."/>
            <person name="Fouts D.E."/>
            <person name="Eisen J.A."/>
            <person name="Gill S.R."/>
            <person name="Heidelberg J.F."/>
            <person name="Tettelin H."/>
            <person name="Dodson R.J."/>
            <person name="Umayam L.A."/>
            <person name="Brinkac L.M."/>
            <person name="Beanan M.J."/>
            <person name="Daugherty S.C."/>
            <person name="DeBoy R.T."/>
            <person name="Durkin S.A."/>
            <person name="Kolonay J.F."/>
            <person name="Madupu R."/>
            <person name="Nelson W.C."/>
            <person name="Vamathevan J.J."/>
            <person name="Tran B."/>
            <person name="Upton J."/>
            <person name="Hansen T."/>
            <person name="Shetty J."/>
            <person name="Khouri H.M."/>
            <person name="Utterback T.R."/>
            <person name="Radune D."/>
            <person name="Ketchum K.A."/>
            <person name="Dougherty B.A."/>
            <person name="Fraser C.M."/>
        </authorList>
    </citation>
    <scope>NUCLEOTIDE SEQUENCE [LARGE SCALE GENOMIC DNA]</scope>
    <source>
        <strain>ATCC 700802 / V583</strain>
    </source>
</reference>
<name>RL333_ENTFA</name>
<keyword id="KW-0002">3D-structure</keyword>
<keyword id="KW-1185">Reference proteome</keyword>
<keyword id="KW-0687">Ribonucleoprotein</keyword>
<keyword id="KW-0689">Ribosomal protein</keyword>
<gene>
    <name type="primary">rpmG3</name>
    <name type="synonym">rpmG-3</name>
    <name type="ordered locus">EF_2856</name>
</gene>
<dbReference type="EMBL" id="AE016830">
    <property type="protein sequence ID" value="AAO82548.1"/>
    <property type="molecule type" value="Genomic_DNA"/>
</dbReference>
<dbReference type="RefSeq" id="NP_816478.1">
    <property type="nucleotide sequence ID" value="NC_004668.1"/>
</dbReference>
<dbReference type="PDB" id="6WU9">
    <property type="method" value="EM"/>
    <property type="resolution" value="2.90 A"/>
    <property type="chains" value="3=1-49"/>
</dbReference>
<dbReference type="PDB" id="7P7Q">
    <property type="method" value="EM"/>
    <property type="resolution" value="2.40 A"/>
    <property type="chains" value="5=1-49"/>
</dbReference>
<dbReference type="PDB" id="7P7R">
    <property type="method" value="EM"/>
    <property type="resolution" value="2.90 A"/>
    <property type="chains" value="5=1-48"/>
</dbReference>
<dbReference type="PDBsum" id="6WU9"/>
<dbReference type="PDBsum" id="7P7Q"/>
<dbReference type="PDBsum" id="7P7R"/>
<dbReference type="EMDB" id="EMD-13241"/>
<dbReference type="EMDB" id="EMD-13242"/>
<dbReference type="SMR" id="P59628"/>
<dbReference type="STRING" id="226185.EF_2856"/>
<dbReference type="EnsemblBacteria" id="AAO82548">
    <property type="protein sequence ID" value="AAO82548"/>
    <property type="gene ID" value="EF_2856"/>
</dbReference>
<dbReference type="KEGG" id="efa:EF2856"/>
<dbReference type="PATRIC" id="fig|226185.45.peg.716"/>
<dbReference type="eggNOG" id="COG0267">
    <property type="taxonomic scope" value="Bacteria"/>
</dbReference>
<dbReference type="HOGENOM" id="CLU_190949_0_2_9"/>
<dbReference type="Proteomes" id="UP000001415">
    <property type="component" value="Chromosome"/>
</dbReference>
<dbReference type="GO" id="GO:0005737">
    <property type="term" value="C:cytoplasm"/>
    <property type="evidence" value="ECO:0007669"/>
    <property type="project" value="UniProtKB-ARBA"/>
</dbReference>
<dbReference type="GO" id="GO:1990904">
    <property type="term" value="C:ribonucleoprotein complex"/>
    <property type="evidence" value="ECO:0007669"/>
    <property type="project" value="UniProtKB-KW"/>
</dbReference>
<dbReference type="GO" id="GO:0005840">
    <property type="term" value="C:ribosome"/>
    <property type="evidence" value="ECO:0007669"/>
    <property type="project" value="UniProtKB-KW"/>
</dbReference>
<dbReference type="GO" id="GO:0003735">
    <property type="term" value="F:structural constituent of ribosome"/>
    <property type="evidence" value="ECO:0007669"/>
    <property type="project" value="InterPro"/>
</dbReference>
<dbReference type="GO" id="GO:0006412">
    <property type="term" value="P:translation"/>
    <property type="evidence" value="ECO:0007669"/>
    <property type="project" value="UniProtKB-UniRule"/>
</dbReference>
<dbReference type="Gene3D" id="2.20.28.120">
    <property type="entry name" value="Ribosomal protein L33"/>
    <property type="match status" value="1"/>
</dbReference>
<dbReference type="HAMAP" id="MF_00294">
    <property type="entry name" value="Ribosomal_bL33"/>
    <property type="match status" value="1"/>
</dbReference>
<dbReference type="InterPro" id="IPR001705">
    <property type="entry name" value="Ribosomal_bL33"/>
</dbReference>
<dbReference type="InterPro" id="IPR018264">
    <property type="entry name" value="Ribosomal_bL33_CS"/>
</dbReference>
<dbReference type="InterPro" id="IPR038584">
    <property type="entry name" value="Ribosomal_bL33_sf"/>
</dbReference>
<dbReference type="InterPro" id="IPR011332">
    <property type="entry name" value="Ribosomal_zn-bd"/>
</dbReference>
<dbReference type="NCBIfam" id="NF001764">
    <property type="entry name" value="PRK00504.1"/>
    <property type="match status" value="1"/>
</dbReference>
<dbReference type="NCBIfam" id="NF001860">
    <property type="entry name" value="PRK00595.1"/>
    <property type="match status" value="1"/>
</dbReference>
<dbReference type="NCBIfam" id="TIGR01023">
    <property type="entry name" value="rpmG_bact"/>
    <property type="match status" value="1"/>
</dbReference>
<dbReference type="PANTHER" id="PTHR43168">
    <property type="entry name" value="50S RIBOSOMAL PROTEIN L33, CHLOROPLASTIC"/>
    <property type="match status" value="1"/>
</dbReference>
<dbReference type="PANTHER" id="PTHR43168:SF2">
    <property type="entry name" value="LARGE RIBOSOMAL SUBUNIT PROTEIN BL33C"/>
    <property type="match status" value="1"/>
</dbReference>
<dbReference type="Pfam" id="PF00471">
    <property type="entry name" value="Ribosomal_L33"/>
    <property type="match status" value="1"/>
</dbReference>
<dbReference type="SUPFAM" id="SSF57829">
    <property type="entry name" value="Zn-binding ribosomal proteins"/>
    <property type="match status" value="1"/>
</dbReference>
<dbReference type="PROSITE" id="PS00582">
    <property type="entry name" value="RIBOSOMAL_L33"/>
    <property type="match status" value="1"/>
</dbReference>